<accession>P58746</accession>
<reference key="1">
    <citation type="journal article" date="1998" name="DNA Res.">
        <title>Complete sequence and gene organization of the genome of a hyper-thermophilic archaebacterium, Pyrococcus horikoshii OT3.</title>
        <authorList>
            <person name="Kawarabayasi Y."/>
            <person name="Sawada M."/>
            <person name="Horikawa H."/>
            <person name="Haikawa Y."/>
            <person name="Hino Y."/>
            <person name="Yamamoto S."/>
            <person name="Sekine M."/>
            <person name="Baba S."/>
            <person name="Kosugi H."/>
            <person name="Hosoyama A."/>
            <person name="Nagai Y."/>
            <person name="Sakai M."/>
            <person name="Ogura K."/>
            <person name="Otsuka R."/>
            <person name="Nakazawa H."/>
            <person name="Takamiya M."/>
            <person name="Ohfuku Y."/>
            <person name="Funahashi T."/>
            <person name="Tanaka T."/>
            <person name="Kudoh Y."/>
            <person name="Yamazaki J."/>
            <person name="Kushida N."/>
            <person name="Oguchi A."/>
            <person name="Aoki K."/>
            <person name="Yoshizawa T."/>
            <person name="Nakamura Y."/>
            <person name="Robb F.T."/>
            <person name="Horikoshi K."/>
            <person name="Masuchi Y."/>
            <person name="Shizuya H."/>
            <person name="Kikuchi H."/>
        </authorList>
    </citation>
    <scope>NUCLEOTIDE SEQUENCE [LARGE SCALE GENOMIC DNA]</scope>
    <source>
        <strain>ATCC 700860 / DSM 12428 / JCM 9974 / NBRC 100139 / OT-3</strain>
    </source>
</reference>
<reference key="2">
    <citation type="unpublished observations" date="2001-12">
        <authorList>
            <person name="Medigue C."/>
            <person name="Bocs S."/>
        </authorList>
    </citation>
    <scope>IDENTIFICATION</scope>
</reference>
<protein>
    <recommendedName>
        <fullName evidence="1">Small ribosomal subunit protein eS24</fullName>
    </recommendedName>
    <alternativeName>
        <fullName evidence="2">30S ribosomal protein S24e</fullName>
    </alternativeName>
</protein>
<proteinExistence type="inferred from homology"/>
<name>RS24_PYRHO</name>
<evidence type="ECO:0000255" key="1">
    <source>
        <dbReference type="HAMAP-Rule" id="MF_00545"/>
    </source>
</evidence>
<evidence type="ECO:0000305" key="2"/>
<gene>
    <name evidence="1" type="primary">rps24e</name>
    <name type="ordered locus">PH1909.1</name>
</gene>
<comment type="similarity">
    <text evidence="1">Belongs to the eukaryotic ribosomal protein eS24 family.</text>
</comment>
<feature type="chain" id="PRO_0000137653" description="Small ribosomal subunit protein eS24">
    <location>
        <begin position="1"/>
        <end position="99"/>
    </location>
</feature>
<dbReference type="EMBL" id="BA000001">
    <property type="status" value="NOT_ANNOTATED_CDS"/>
    <property type="molecule type" value="Genomic_DNA"/>
</dbReference>
<dbReference type="RefSeq" id="WP_010885975.1">
    <property type="nucleotide sequence ID" value="NC_000961.1"/>
</dbReference>
<dbReference type="SMR" id="P58746"/>
<dbReference type="GeneID" id="1442757"/>
<dbReference type="OrthoDB" id="27533at2157"/>
<dbReference type="Proteomes" id="UP000000752">
    <property type="component" value="Chromosome"/>
</dbReference>
<dbReference type="GO" id="GO:1990904">
    <property type="term" value="C:ribonucleoprotein complex"/>
    <property type="evidence" value="ECO:0007669"/>
    <property type="project" value="UniProtKB-KW"/>
</dbReference>
<dbReference type="GO" id="GO:0005840">
    <property type="term" value="C:ribosome"/>
    <property type="evidence" value="ECO:0007669"/>
    <property type="project" value="UniProtKB-KW"/>
</dbReference>
<dbReference type="GO" id="GO:0003735">
    <property type="term" value="F:structural constituent of ribosome"/>
    <property type="evidence" value="ECO:0007669"/>
    <property type="project" value="InterPro"/>
</dbReference>
<dbReference type="GO" id="GO:0006412">
    <property type="term" value="P:translation"/>
    <property type="evidence" value="ECO:0007669"/>
    <property type="project" value="UniProtKB-UniRule"/>
</dbReference>
<dbReference type="Gene3D" id="3.30.70.330">
    <property type="match status" value="1"/>
</dbReference>
<dbReference type="HAMAP" id="MF_00545">
    <property type="entry name" value="Ribosomal_eS24"/>
    <property type="match status" value="1"/>
</dbReference>
<dbReference type="InterPro" id="IPR012677">
    <property type="entry name" value="Nucleotide-bd_a/b_plait_sf"/>
</dbReference>
<dbReference type="InterPro" id="IPR001976">
    <property type="entry name" value="Ribosomal_eS24"/>
</dbReference>
<dbReference type="InterPro" id="IPR018098">
    <property type="entry name" value="Ribosomal_eS24_CS"/>
</dbReference>
<dbReference type="InterPro" id="IPR012678">
    <property type="entry name" value="Ribosomal_uL23/eL15/eS24_sf"/>
</dbReference>
<dbReference type="PANTHER" id="PTHR10496">
    <property type="entry name" value="40S RIBOSOMAL PROTEIN S24"/>
    <property type="match status" value="1"/>
</dbReference>
<dbReference type="Pfam" id="PF01282">
    <property type="entry name" value="Ribosomal_S24e"/>
    <property type="match status" value="1"/>
</dbReference>
<dbReference type="SUPFAM" id="SSF54189">
    <property type="entry name" value="Ribosomal proteins S24e, L23 and L15e"/>
    <property type="match status" value="1"/>
</dbReference>
<dbReference type="PROSITE" id="PS00529">
    <property type="entry name" value="RIBOSOMAL_S24E"/>
    <property type="match status" value="1"/>
</dbReference>
<sequence>MEIKITEVKENKLIGRKEIYFEIYHPGEPTPSRKDVKGKLVAMLDLNPETTVIQYIRSYFGSYKSKGYAKYYYDKERMLYIEPEYILIRDGIIEKKEGE</sequence>
<organism>
    <name type="scientific">Pyrococcus horikoshii (strain ATCC 700860 / DSM 12428 / JCM 9974 / NBRC 100139 / OT-3)</name>
    <dbReference type="NCBI Taxonomy" id="70601"/>
    <lineage>
        <taxon>Archaea</taxon>
        <taxon>Methanobacteriati</taxon>
        <taxon>Methanobacteriota</taxon>
        <taxon>Thermococci</taxon>
        <taxon>Thermococcales</taxon>
        <taxon>Thermococcaceae</taxon>
        <taxon>Pyrococcus</taxon>
    </lineage>
</organism>
<keyword id="KW-0687">Ribonucleoprotein</keyword>
<keyword id="KW-0689">Ribosomal protein</keyword>